<name>IFI44_PANTR</name>
<comment type="function">
    <text>This protein aggregates to form microtubular structures.</text>
</comment>
<comment type="subcellular location">
    <subcellularLocation>
        <location evidence="2">Cytoplasm</location>
    </subcellularLocation>
</comment>
<comment type="tissue specificity">
    <text>Hepatocytes.</text>
</comment>
<comment type="induction">
    <text>During infection of non-A non-B hepatitis virus or hepatitis delta virus.</text>
</comment>
<comment type="similarity">
    <text evidence="2">Belongs to the IFI44 family.</text>
</comment>
<keyword id="KW-0963">Cytoplasm</keyword>
<keyword id="KW-0903">Direct protein sequencing</keyword>
<keyword id="KW-1185">Reference proteome</keyword>
<sequence length="444" mass="50471">MAVTTRLTWLHEKILQNHFGGKRLSLLYKGSVHGFHNGVLLDRCCNQGPTLTVIYSEDHIIGAYAEEGYQERKYASIILFALQETKISEWKLGLYTPETLFCCDVAKYNSPTNFQIDGRNRKVIMDLKTMENLGLAQNCTISIQDYEVFRCEDSLDERKIKGVIELRKSLLSALRTYEPYGSLVQQIRILLLGPIGAGKSSFFNSVRSVFQGHVTHQALVGTNTTGISEKYRTYSIRDGKDGKYLPFILCDSLGLSEKEGGLCMDDISYILNGNIRDRYQFNPMESIKLNHHDYIDSPSLKDRIHCVAFVFDASSIEYFSSQMIVKIKRIRRELVNAGVVHVALLTHVDSMDLITKGDLIEIERCVPVRSKLEEVQRKLGFALSDISVVSNYSSEWELDPVKDVLILSALRRMLWAADDFLEDLPFEQIGNLREEIINCAQGKK</sequence>
<gene>
    <name type="primary">IFI44</name>
</gene>
<feature type="chain" id="PRO_0000084166" description="Interferon-induced protein 44">
    <location>
        <begin position="1"/>
        <end position="444"/>
    </location>
</feature>
<feature type="domain" description="TLDc" evidence="1">
    <location>
        <begin position="1"/>
        <end position="152"/>
    </location>
</feature>
<proteinExistence type="evidence at protein level"/>
<accession>P27473</accession>
<organism>
    <name type="scientific">Pan troglodytes</name>
    <name type="common">Chimpanzee</name>
    <dbReference type="NCBI Taxonomy" id="9598"/>
    <lineage>
        <taxon>Eukaryota</taxon>
        <taxon>Metazoa</taxon>
        <taxon>Chordata</taxon>
        <taxon>Craniata</taxon>
        <taxon>Vertebrata</taxon>
        <taxon>Euteleostomi</taxon>
        <taxon>Mammalia</taxon>
        <taxon>Eutheria</taxon>
        <taxon>Euarchontoglires</taxon>
        <taxon>Primates</taxon>
        <taxon>Haplorrhini</taxon>
        <taxon>Catarrhini</taxon>
        <taxon>Hominidae</taxon>
        <taxon>Pan</taxon>
    </lineage>
</organism>
<dbReference type="EMBL" id="D90034">
    <property type="protein sequence ID" value="BAA14082.1"/>
    <property type="molecule type" value="mRNA"/>
</dbReference>
<dbReference type="PIR" id="A43676">
    <property type="entry name" value="A43676"/>
</dbReference>
<dbReference type="RefSeq" id="NP_001038962.1">
    <property type="nucleotide sequence ID" value="NM_001045497.2"/>
</dbReference>
<dbReference type="FunCoup" id="P27473">
    <property type="interactions" value="22"/>
</dbReference>
<dbReference type="STRING" id="9598.ENSPTRP00000001546"/>
<dbReference type="PaxDb" id="9598-ENSPTRP00000001546"/>
<dbReference type="Ensembl" id="ENSPTRT00000001694.4">
    <property type="protein sequence ID" value="ENSPTRP00000001546.3"/>
    <property type="gene ID" value="ENSPTRG00000000893.4"/>
</dbReference>
<dbReference type="GeneID" id="456971"/>
<dbReference type="KEGG" id="ptr:456971"/>
<dbReference type="CTD" id="10561"/>
<dbReference type="VGNC" id="VGNC:6881">
    <property type="gene designation" value="IFI44"/>
</dbReference>
<dbReference type="eggNOG" id="ENOG502QQ57">
    <property type="taxonomic scope" value="Eukaryota"/>
</dbReference>
<dbReference type="GeneTree" id="ENSGT00940000162964"/>
<dbReference type="HOGENOM" id="CLU_049888_3_1_1"/>
<dbReference type="InParanoid" id="P27473"/>
<dbReference type="OMA" id="NSMKPIT"/>
<dbReference type="TreeFam" id="TF328728"/>
<dbReference type="Proteomes" id="UP000002277">
    <property type="component" value="Chromosome 1"/>
</dbReference>
<dbReference type="Bgee" id="ENSPTRG00000000893">
    <property type="expression patterns" value="Expressed in spleen and 20 other cell types or tissues"/>
</dbReference>
<dbReference type="GO" id="GO:0005737">
    <property type="term" value="C:cytoplasm"/>
    <property type="evidence" value="ECO:0007669"/>
    <property type="project" value="UniProtKB-SubCell"/>
</dbReference>
<dbReference type="GO" id="GO:0098586">
    <property type="term" value="P:cellular response to virus"/>
    <property type="evidence" value="ECO:0007669"/>
    <property type="project" value="Ensembl"/>
</dbReference>
<dbReference type="GO" id="GO:0006955">
    <property type="term" value="P:immune response"/>
    <property type="evidence" value="ECO:0000318"/>
    <property type="project" value="GO_Central"/>
</dbReference>
<dbReference type="GO" id="GO:0009617">
    <property type="term" value="P:response to bacterium"/>
    <property type="evidence" value="ECO:0007669"/>
    <property type="project" value="Ensembl"/>
</dbReference>
<dbReference type="FunFam" id="3.40.50.300:FF:001535">
    <property type="entry name" value="Interferon induced protein 44"/>
    <property type="match status" value="1"/>
</dbReference>
<dbReference type="Gene3D" id="3.40.50.300">
    <property type="entry name" value="P-loop containing nucleotide triphosphate hydrolases"/>
    <property type="match status" value="1"/>
</dbReference>
<dbReference type="InterPro" id="IPR027417">
    <property type="entry name" value="P-loop_NTPase"/>
</dbReference>
<dbReference type="InterPro" id="IPR006571">
    <property type="entry name" value="TLDc_dom"/>
</dbReference>
<dbReference type="PANTHER" id="PTHR14241">
    <property type="entry name" value="INTERFERON-INDUCED PROTEIN 44"/>
    <property type="match status" value="1"/>
</dbReference>
<dbReference type="PANTHER" id="PTHR14241:SF3">
    <property type="entry name" value="INTERFERON-INDUCED PROTEIN 44"/>
    <property type="match status" value="1"/>
</dbReference>
<dbReference type="SUPFAM" id="SSF52540">
    <property type="entry name" value="P-loop containing nucleoside triphosphate hydrolases"/>
    <property type="match status" value="1"/>
</dbReference>
<dbReference type="PROSITE" id="PS51886">
    <property type="entry name" value="TLDC"/>
    <property type="match status" value="1"/>
</dbReference>
<reference key="1">
    <citation type="journal article" date="1990" name="J. Gen. Virol.">
        <title>Cloning, sequencing and expression in Escherichia coli of cDNA for a non-A, non-B hepatitis-associated microtubular aggregates protein.</title>
        <authorList>
            <person name="Takahashi K."/>
            <person name="Kitamura N."/>
            <person name="Shibui T."/>
            <person name="Kamizono M."/>
            <person name="Matsui R."/>
            <person name="Yoshiyama Y."/>
            <person name="Maeda T."/>
            <person name="Kondo J."/>
            <person name="Honda Y."/>
            <person name="Yamada E."/>
            <person name="Shimizu Y.K."/>
            <person name="Teranishi Y."/>
            <person name="Nakanishi S."/>
        </authorList>
    </citation>
    <scope>NUCLEOTIDE SEQUENCE [MRNA]</scope>
    <scope>PROTEIN SEQUENCE OF 14-22; 108-128 AND 231-240</scope>
    <source>
        <tissue>Liver</tissue>
    </source>
</reference>
<reference key="2">
    <citation type="journal article" date="1990" name="J. Gen. Virol.">
        <title>Isolation and purification of a non-A, non-B hepatitis-associated microtubular aggregates protein.</title>
        <authorList>
            <person name="Honda Y."/>
            <person name="Kondo J."/>
            <person name="Maeda T."/>
            <person name="Yoshiyama Y."/>
            <person name="Yamada E."/>
            <person name="Shimizu Y.K."/>
            <person name="Shikata T."/>
            <person name="Ono Y."/>
        </authorList>
    </citation>
    <scope>PARTIAL PROTEIN SEQUENCE</scope>
    <source>
        <tissue>Liver</tissue>
    </source>
</reference>
<evidence type="ECO:0000255" key="1">
    <source>
        <dbReference type="PROSITE-ProRule" id="PRU01234"/>
    </source>
</evidence>
<evidence type="ECO:0000305" key="2"/>
<protein>
    <recommendedName>
        <fullName>Interferon-induced protein 44</fullName>
    </recommendedName>
    <alternativeName>
        <fullName>Antigen p44</fullName>
    </alternativeName>
    <alternativeName>
        <fullName>Non-A non-B hepatitis-associated microtubular aggregates protein</fullName>
    </alternativeName>
</protein>